<evidence type="ECO:0000255" key="1">
    <source>
        <dbReference type="HAMAP-Rule" id="MF_00436"/>
    </source>
</evidence>
<evidence type="ECO:0000255" key="2">
    <source>
        <dbReference type="PROSITE-ProRule" id="PRU01346"/>
    </source>
</evidence>
<gene>
    <name evidence="1" type="primary">hfq</name>
    <name type="ordered locus">Bind_1525</name>
</gene>
<comment type="function">
    <text evidence="1">RNA chaperone that binds small regulatory RNA (sRNAs) and mRNAs to facilitate mRNA translational regulation in response to envelope stress, environmental stress and changes in metabolite concentrations. Also binds with high specificity to tRNAs.</text>
</comment>
<comment type="subunit">
    <text evidence="1">Homohexamer.</text>
</comment>
<comment type="similarity">
    <text evidence="1">Belongs to the Hfq family.</text>
</comment>
<keyword id="KW-1185">Reference proteome</keyword>
<keyword id="KW-0694">RNA-binding</keyword>
<keyword id="KW-0346">Stress response</keyword>
<sequence>MAVDRPQNLQDTFLNFVRKNKVPLTIFLVNGVKLQGVVTWFDNFCVLLRRDGHSQLVYKHAISTIMPGAPIQMFEPGDEAGHAG</sequence>
<dbReference type="EMBL" id="CP001016">
    <property type="protein sequence ID" value="ACB95158.1"/>
    <property type="molecule type" value="Genomic_DNA"/>
</dbReference>
<dbReference type="RefSeq" id="WP_012384515.1">
    <property type="nucleotide sequence ID" value="NC_010581.1"/>
</dbReference>
<dbReference type="SMR" id="B2IB74"/>
<dbReference type="STRING" id="395963.Bind_1525"/>
<dbReference type="KEGG" id="bid:Bind_1525"/>
<dbReference type="eggNOG" id="COG1923">
    <property type="taxonomic scope" value="Bacteria"/>
</dbReference>
<dbReference type="HOGENOM" id="CLU_113688_0_0_5"/>
<dbReference type="OrthoDB" id="9799751at2"/>
<dbReference type="Proteomes" id="UP000001695">
    <property type="component" value="Chromosome"/>
</dbReference>
<dbReference type="GO" id="GO:0005829">
    <property type="term" value="C:cytosol"/>
    <property type="evidence" value="ECO:0007669"/>
    <property type="project" value="TreeGrafter"/>
</dbReference>
<dbReference type="GO" id="GO:0003723">
    <property type="term" value="F:RNA binding"/>
    <property type="evidence" value="ECO:0007669"/>
    <property type="project" value="UniProtKB-UniRule"/>
</dbReference>
<dbReference type="GO" id="GO:0006355">
    <property type="term" value="P:regulation of DNA-templated transcription"/>
    <property type="evidence" value="ECO:0007669"/>
    <property type="project" value="InterPro"/>
</dbReference>
<dbReference type="GO" id="GO:0043487">
    <property type="term" value="P:regulation of RNA stability"/>
    <property type="evidence" value="ECO:0007669"/>
    <property type="project" value="TreeGrafter"/>
</dbReference>
<dbReference type="GO" id="GO:0045974">
    <property type="term" value="P:regulation of translation, ncRNA-mediated"/>
    <property type="evidence" value="ECO:0007669"/>
    <property type="project" value="TreeGrafter"/>
</dbReference>
<dbReference type="CDD" id="cd01716">
    <property type="entry name" value="Hfq"/>
    <property type="match status" value="1"/>
</dbReference>
<dbReference type="FunFam" id="2.30.30.100:FF:000001">
    <property type="entry name" value="RNA-binding protein Hfq"/>
    <property type="match status" value="1"/>
</dbReference>
<dbReference type="Gene3D" id="2.30.30.100">
    <property type="match status" value="1"/>
</dbReference>
<dbReference type="HAMAP" id="MF_00436">
    <property type="entry name" value="Hfq"/>
    <property type="match status" value="1"/>
</dbReference>
<dbReference type="InterPro" id="IPR005001">
    <property type="entry name" value="Hfq"/>
</dbReference>
<dbReference type="InterPro" id="IPR010920">
    <property type="entry name" value="LSM_dom_sf"/>
</dbReference>
<dbReference type="InterPro" id="IPR047575">
    <property type="entry name" value="Sm"/>
</dbReference>
<dbReference type="NCBIfam" id="TIGR02383">
    <property type="entry name" value="Hfq"/>
    <property type="match status" value="1"/>
</dbReference>
<dbReference type="NCBIfam" id="NF001602">
    <property type="entry name" value="PRK00395.1"/>
    <property type="match status" value="1"/>
</dbReference>
<dbReference type="PANTHER" id="PTHR34772">
    <property type="entry name" value="RNA-BINDING PROTEIN HFQ"/>
    <property type="match status" value="1"/>
</dbReference>
<dbReference type="PANTHER" id="PTHR34772:SF1">
    <property type="entry name" value="RNA-BINDING PROTEIN HFQ"/>
    <property type="match status" value="1"/>
</dbReference>
<dbReference type="Pfam" id="PF17209">
    <property type="entry name" value="Hfq"/>
    <property type="match status" value="1"/>
</dbReference>
<dbReference type="SUPFAM" id="SSF50182">
    <property type="entry name" value="Sm-like ribonucleoproteins"/>
    <property type="match status" value="1"/>
</dbReference>
<dbReference type="PROSITE" id="PS52002">
    <property type="entry name" value="SM"/>
    <property type="match status" value="1"/>
</dbReference>
<accession>B2IB74</accession>
<reference key="1">
    <citation type="journal article" date="2010" name="J. Bacteriol.">
        <title>Complete genome sequence of Beijerinckia indica subsp. indica.</title>
        <authorList>
            <person name="Tamas I."/>
            <person name="Dedysh S.N."/>
            <person name="Liesack W."/>
            <person name="Stott M.B."/>
            <person name="Alam M."/>
            <person name="Murrell J.C."/>
            <person name="Dunfield P.F."/>
        </authorList>
    </citation>
    <scope>NUCLEOTIDE SEQUENCE [LARGE SCALE GENOMIC DNA]</scope>
    <source>
        <strain>ATCC 9039 / DSM 1715 / NCIMB 8712</strain>
    </source>
</reference>
<feature type="chain" id="PRO_1000190307" description="RNA-binding protein Hfq">
    <location>
        <begin position="1"/>
        <end position="84"/>
    </location>
</feature>
<feature type="domain" description="Sm" evidence="2">
    <location>
        <begin position="11"/>
        <end position="71"/>
    </location>
</feature>
<protein>
    <recommendedName>
        <fullName evidence="1">RNA-binding protein Hfq</fullName>
    </recommendedName>
</protein>
<organism>
    <name type="scientific">Beijerinckia indica subsp. indica (strain ATCC 9039 / DSM 1715 / NCIMB 8712)</name>
    <dbReference type="NCBI Taxonomy" id="395963"/>
    <lineage>
        <taxon>Bacteria</taxon>
        <taxon>Pseudomonadati</taxon>
        <taxon>Pseudomonadota</taxon>
        <taxon>Alphaproteobacteria</taxon>
        <taxon>Hyphomicrobiales</taxon>
        <taxon>Beijerinckiaceae</taxon>
        <taxon>Beijerinckia</taxon>
    </lineage>
</organism>
<name>HFQ_BEII9</name>
<proteinExistence type="inferred from homology"/>